<feature type="chain" id="PRO_1000072458" description="Small ribosomal subunit protein uS10">
    <location>
        <begin position="1"/>
        <end position="103"/>
    </location>
</feature>
<proteinExistence type="inferred from homology"/>
<name>RS10_ACTSZ</name>
<comment type="function">
    <text evidence="1">Involved in the binding of tRNA to the ribosomes.</text>
</comment>
<comment type="subunit">
    <text evidence="1">Part of the 30S ribosomal subunit.</text>
</comment>
<comment type="similarity">
    <text evidence="1">Belongs to the universal ribosomal protein uS10 family.</text>
</comment>
<accession>A6VLI7</accession>
<protein>
    <recommendedName>
        <fullName evidence="1">Small ribosomal subunit protein uS10</fullName>
    </recommendedName>
    <alternativeName>
        <fullName evidence="2">30S ribosomal protein S10</fullName>
    </alternativeName>
</protein>
<reference key="1">
    <citation type="journal article" date="2010" name="BMC Genomics">
        <title>A genomic perspective on the potential of Actinobacillus succinogenes for industrial succinate production.</title>
        <authorList>
            <person name="McKinlay J.B."/>
            <person name="Laivenieks M."/>
            <person name="Schindler B.D."/>
            <person name="McKinlay A.A."/>
            <person name="Siddaramappa S."/>
            <person name="Challacombe J.F."/>
            <person name="Lowry S.R."/>
            <person name="Clum A."/>
            <person name="Lapidus A.L."/>
            <person name="Burkhart K.B."/>
            <person name="Harkins V."/>
            <person name="Vieille C."/>
        </authorList>
    </citation>
    <scope>NUCLEOTIDE SEQUENCE [LARGE SCALE GENOMIC DNA]</scope>
    <source>
        <strain>ATCC 55618 / DSM 22257 / CCUG 43843 / 130Z</strain>
    </source>
</reference>
<evidence type="ECO:0000255" key="1">
    <source>
        <dbReference type="HAMAP-Rule" id="MF_00508"/>
    </source>
</evidence>
<evidence type="ECO:0000305" key="2"/>
<organism>
    <name type="scientific">Actinobacillus succinogenes (strain ATCC 55618 / DSM 22257 / CCUG 43843 / 130Z)</name>
    <dbReference type="NCBI Taxonomy" id="339671"/>
    <lineage>
        <taxon>Bacteria</taxon>
        <taxon>Pseudomonadati</taxon>
        <taxon>Pseudomonadota</taxon>
        <taxon>Gammaproteobacteria</taxon>
        <taxon>Pasteurellales</taxon>
        <taxon>Pasteurellaceae</taxon>
        <taxon>Actinobacillus</taxon>
    </lineage>
</organism>
<keyword id="KW-1185">Reference proteome</keyword>
<keyword id="KW-0687">Ribonucleoprotein</keyword>
<keyword id="KW-0689">Ribosomal protein</keyword>
<sequence length="103" mass="11767">MQNQRIRIRLKAFDHRLIDQSTAEIVETAKRTGAQVRGPIPLPTRKERFTVLISPHVNKDARDQYEIRTHKRLVDIVEPTEKTVDALMRLDLAAGVDVQISLG</sequence>
<gene>
    <name evidence="1" type="primary">rpsJ</name>
    <name type="ordered locus">Asuc_0458</name>
</gene>
<dbReference type="EMBL" id="CP000746">
    <property type="protein sequence ID" value="ABR73834.1"/>
    <property type="molecule type" value="Genomic_DNA"/>
</dbReference>
<dbReference type="RefSeq" id="WP_001181005.1">
    <property type="nucleotide sequence ID" value="NC_009655.1"/>
</dbReference>
<dbReference type="SMR" id="A6VLI7"/>
<dbReference type="STRING" id="339671.Asuc_0458"/>
<dbReference type="GeneID" id="98390443"/>
<dbReference type="KEGG" id="asu:Asuc_0458"/>
<dbReference type="eggNOG" id="COG0051">
    <property type="taxonomic scope" value="Bacteria"/>
</dbReference>
<dbReference type="HOGENOM" id="CLU_122625_1_3_6"/>
<dbReference type="OrthoDB" id="9804464at2"/>
<dbReference type="Proteomes" id="UP000001114">
    <property type="component" value="Chromosome"/>
</dbReference>
<dbReference type="GO" id="GO:1990904">
    <property type="term" value="C:ribonucleoprotein complex"/>
    <property type="evidence" value="ECO:0007669"/>
    <property type="project" value="UniProtKB-KW"/>
</dbReference>
<dbReference type="GO" id="GO:0005840">
    <property type="term" value="C:ribosome"/>
    <property type="evidence" value="ECO:0007669"/>
    <property type="project" value="UniProtKB-KW"/>
</dbReference>
<dbReference type="GO" id="GO:0003735">
    <property type="term" value="F:structural constituent of ribosome"/>
    <property type="evidence" value="ECO:0007669"/>
    <property type="project" value="InterPro"/>
</dbReference>
<dbReference type="GO" id="GO:0000049">
    <property type="term" value="F:tRNA binding"/>
    <property type="evidence" value="ECO:0007669"/>
    <property type="project" value="UniProtKB-UniRule"/>
</dbReference>
<dbReference type="GO" id="GO:0006412">
    <property type="term" value="P:translation"/>
    <property type="evidence" value="ECO:0007669"/>
    <property type="project" value="UniProtKB-UniRule"/>
</dbReference>
<dbReference type="FunFam" id="3.30.70.600:FF:000001">
    <property type="entry name" value="30S ribosomal protein S10"/>
    <property type="match status" value="1"/>
</dbReference>
<dbReference type="Gene3D" id="3.30.70.600">
    <property type="entry name" value="Ribosomal protein S10 domain"/>
    <property type="match status" value="1"/>
</dbReference>
<dbReference type="HAMAP" id="MF_00508">
    <property type="entry name" value="Ribosomal_uS10"/>
    <property type="match status" value="1"/>
</dbReference>
<dbReference type="InterPro" id="IPR001848">
    <property type="entry name" value="Ribosomal_uS10"/>
</dbReference>
<dbReference type="InterPro" id="IPR018268">
    <property type="entry name" value="Ribosomal_uS10_CS"/>
</dbReference>
<dbReference type="InterPro" id="IPR027486">
    <property type="entry name" value="Ribosomal_uS10_dom"/>
</dbReference>
<dbReference type="InterPro" id="IPR036838">
    <property type="entry name" value="Ribosomal_uS10_dom_sf"/>
</dbReference>
<dbReference type="NCBIfam" id="NF001861">
    <property type="entry name" value="PRK00596.1"/>
    <property type="match status" value="1"/>
</dbReference>
<dbReference type="NCBIfam" id="TIGR01049">
    <property type="entry name" value="rpsJ_bact"/>
    <property type="match status" value="1"/>
</dbReference>
<dbReference type="PANTHER" id="PTHR11700">
    <property type="entry name" value="30S RIBOSOMAL PROTEIN S10 FAMILY MEMBER"/>
    <property type="match status" value="1"/>
</dbReference>
<dbReference type="Pfam" id="PF00338">
    <property type="entry name" value="Ribosomal_S10"/>
    <property type="match status" value="1"/>
</dbReference>
<dbReference type="PRINTS" id="PR00971">
    <property type="entry name" value="RIBOSOMALS10"/>
</dbReference>
<dbReference type="SMART" id="SM01403">
    <property type="entry name" value="Ribosomal_S10"/>
    <property type="match status" value="1"/>
</dbReference>
<dbReference type="SUPFAM" id="SSF54999">
    <property type="entry name" value="Ribosomal protein S10"/>
    <property type="match status" value="1"/>
</dbReference>
<dbReference type="PROSITE" id="PS00361">
    <property type="entry name" value="RIBOSOMAL_S10"/>
    <property type="match status" value="1"/>
</dbReference>